<organism>
    <name type="scientific">Nostoc sp. (strain PCC 7120 / SAG 25.82 / UTEX 2576)</name>
    <dbReference type="NCBI Taxonomy" id="103690"/>
    <lineage>
        <taxon>Bacteria</taxon>
        <taxon>Bacillati</taxon>
        <taxon>Cyanobacteriota</taxon>
        <taxon>Cyanophyceae</taxon>
        <taxon>Nostocales</taxon>
        <taxon>Nostocaceae</taxon>
        <taxon>Nostoc</taxon>
    </lineage>
</organism>
<accession>Q8YXJ9</accession>
<reference key="1">
    <citation type="journal article" date="2001" name="DNA Res.">
        <title>Complete genomic sequence of the filamentous nitrogen-fixing cyanobacterium Anabaena sp. strain PCC 7120.</title>
        <authorList>
            <person name="Kaneko T."/>
            <person name="Nakamura Y."/>
            <person name="Wolk C.P."/>
            <person name="Kuritz T."/>
            <person name="Sasamoto S."/>
            <person name="Watanabe A."/>
            <person name="Iriguchi M."/>
            <person name="Ishikawa A."/>
            <person name="Kawashima K."/>
            <person name="Kimura T."/>
            <person name="Kishida Y."/>
            <person name="Kohara M."/>
            <person name="Matsumoto M."/>
            <person name="Matsuno A."/>
            <person name="Muraki A."/>
            <person name="Nakazaki N."/>
            <person name="Shimpo S."/>
            <person name="Sugimoto M."/>
            <person name="Takazawa M."/>
            <person name="Yamada M."/>
            <person name="Yasuda M."/>
            <person name="Tabata S."/>
        </authorList>
    </citation>
    <scope>NUCLEOTIDE SEQUENCE [LARGE SCALE GENOMIC DNA]</scope>
    <source>
        <strain>PCC 7120 / SAG 25.82 / UTEX 2576</strain>
    </source>
</reference>
<gene>
    <name evidence="1" type="primary">uppP</name>
    <name type="synonym">bacA</name>
    <name type="synonym">upk</name>
    <name type="ordered locus">all1214</name>
</gene>
<protein>
    <recommendedName>
        <fullName evidence="1">Undecaprenyl-diphosphatase</fullName>
        <ecNumber evidence="1">3.6.1.27</ecNumber>
    </recommendedName>
    <alternativeName>
        <fullName evidence="1">Bacitracin resistance protein</fullName>
    </alternativeName>
    <alternativeName>
        <fullName evidence="1">Undecaprenyl pyrophosphate phosphatase</fullName>
    </alternativeName>
</protein>
<proteinExistence type="inferred from homology"/>
<keyword id="KW-0046">Antibiotic resistance</keyword>
<keyword id="KW-0997">Cell inner membrane</keyword>
<keyword id="KW-1003">Cell membrane</keyword>
<keyword id="KW-0133">Cell shape</keyword>
<keyword id="KW-0961">Cell wall biogenesis/degradation</keyword>
<keyword id="KW-0378">Hydrolase</keyword>
<keyword id="KW-0472">Membrane</keyword>
<keyword id="KW-0573">Peptidoglycan synthesis</keyword>
<keyword id="KW-1185">Reference proteome</keyword>
<keyword id="KW-0812">Transmembrane</keyword>
<keyword id="KW-1133">Transmembrane helix</keyword>
<comment type="function">
    <text evidence="1">Catalyzes the dephosphorylation of undecaprenyl diphosphate (UPP). Confers resistance to bacitracin.</text>
</comment>
<comment type="catalytic activity">
    <reaction evidence="1">
        <text>di-trans,octa-cis-undecaprenyl diphosphate + H2O = di-trans,octa-cis-undecaprenyl phosphate + phosphate + H(+)</text>
        <dbReference type="Rhea" id="RHEA:28094"/>
        <dbReference type="ChEBI" id="CHEBI:15377"/>
        <dbReference type="ChEBI" id="CHEBI:15378"/>
        <dbReference type="ChEBI" id="CHEBI:43474"/>
        <dbReference type="ChEBI" id="CHEBI:58405"/>
        <dbReference type="ChEBI" id="CHEBI:60392"/>
        <dbReference type="EC" id="3.6.1.27"/>
    </reaction>
</comment>
<comment type="subcellular location">
    <subcellularLocation>
        <location evidence="1">Cell inner membrane</location>
        <topology evidence="1">Multi-pass membrane protein</topology>
    </subcellularLocation>
</comment>
<comment type="miscellaneous">
    <text>Bacitracin is thought to be involved in the inhibition of peptidoglycan synthesis by sequestering undecaprenyl diphosphate, thereby reducing the pool of lipid carrier available.</text>
</comment>
<comment type="similarity">
    <text evidence="1">Belongs to the UppP family.</text>
</comment>
<feature type="chain" id="PRO_0000151081" description="Undecaprenyl-diphosphatase">
    <location>
        <begin position="1"/>
        <end position="320"/>
    </location>
</feature>
<feature type="transmembrane region" description="Helical" evidence="1">
    <location>
        <begin position="9"/>
        <end position="29"/>
    </location>
</feature>
<feature type="transmembrane region" description="Helical" evidence="1">
    <location>
        <begin position="82"/>
        <end position="102"/>
    </location>
</feature>
<feature type="transmembrane region" description="Helical" evidence="1">
    <location>
        <begin position="130"/>
        <end position="150"/>
    </location>
</feature>
<feature type="transmembrane region" description="Helical" evidence="1">
    <location>
        <begin position="161"/>
        <end position="181"/>
    </location>
</feature>
<feature type="transmembrane region" description="Helical" evidence="1">
    <location>
        <begin position="191"/>
        <end position="211"/>
    </location>
</feature>
<feature type="transmembrane region" description="Helical" evidence="1">
    <location>
        <begin position="236"/>
        <end position="256"/>
    </location>
</feature>
<feature type="transmembrane region" description="Helical" evidence="1">
    <location>
        <begin position="265"/>
        <end position="285"/>
    </location>
</feature>
<feature type="transmembrane region" description="Helical" evidence="1">
    <location>
        <begin position="296"/>
        <end position="316"/>
    </location>
</feature>
<dbReference type="EC" id="3.6.1.27" evidence="1"/>
<dbReference type="EMBL" id="BA000019">
    <property type="protein sequence ID" value="BAB73171.1"/>
    <property type="molecule type" value="Genomic_DNA"/>
</dbReference>
<dbReference type="PIR" id="AC1958">
    <property type="entry name" value="AC1958"/>
</dbReference>
<dbReference type="RefSeq" id="WP_010995386.1">
    <property type="nucleotide sequence ID" value="NZ_RSCN01000021.1"/>
</dbReference>
<dbReference type="SMR" id="Q8YXJ9"/>
<dbReference type="STRING" id="103690.gene:10493228"/>
<dbReference type="KEGG" id="ana:all1214"/>
<dbReference type="eggNOG" id="COG1968">
    <property type="taxonomic scope" value="Bacteria"/>
</dbReference>
<dbReference type="OrthoDB" id="9808289at2"/>
<dbReference type="Proteomes" id="UP000002483">
    <property type="component" value="Chromosome"/>
</dbReference>
<dbReference type="GO" id="GO:0005886">
    <property type="term" value="C:plasma membrane"/>
    <property type="evidence" value="ECO:0007669"/>
    <property type="project" value="UniProtKB-SubCell"/>
</dbReference>
<dbReference type="GO" id="GO:0050380">
    <property type="term" value="F:undecaprenyl-diphosphatase activity"/>
    <property type="evidence" value="ECO:0007669"/>
    <property type="project" value="UniProtKB-UniRule"/>
</dbReference>
<dbReference type="GO" id="GO:0071555">
    <property type="term" value="P:cell wall organization"/>
    <property type="evidence" value="ECO:0007669"/>
    <property type="project" value="UniProtKB-KW"/>
</dbReference>
<dbReference type="GO" id="GO:0009252">
    <property type="term" value="P:peptidoglycan biosynthetic process"/>
    <property type="evidence" value="ECO:0007669"/>
    <property type="project" value="UniProtKB-KW"/>
</dbReference>
<dbReference type="GO" id="GO:0008360">
    <property type="term" value="P:regulation of cell shape"/>
    <property type="evidence" value="ECO:0007669"/>
    <property type="project" value="UniProtKB-KW"/>
</dbReference>
<dbReference type="GO" id="GO:0046677">
    <property type="term" value="P:response to antibiotic"/>
    <property type="evidence" value="ECO:0007669"/>
    <property type="project" value="UniProtKB-UniRule"/>
</dbReference>
<dbReference type="HAMAP" id="MF_01006">
    <property type="entry name" value="Undec_diphosphatase"/>
    <property type="match status" value="1"/>
</dbReference>
<dbReference type="InterPro" id="IPR003824">
    <property type="entry name" value="UppP"/>
</dbReference>
<dbReference type="NCBIfam" id="NF001394">
    <property type="entry name" value="PRK00281.2-5"/>
    <property type="match status" value="1"/>
</dbReference>
<dbReference type="NCBIfam" id="TIGR00753">
    <property type="entry name" value="undec_PP_bacA"/>
    <property type="match status" value="1"/>
</dbReference>
<dbReference type="PANTHER" id="PTHR30622">
    <property type="entry name" value="UNDECAPRENYL-DIPHOSPHATASE"/>
    <property type="match status" value="1"/>
</dbReference>
<dbReference type="PANTHER" id="PTHR30622:SF4">
    <property type="entry name" value="UNDECAPRENYL-DIPHOSPHATASE"/>
    <property type="match status" value="1"/>
</dbReference>
<dbReference type="Pfam" id="PF02673">
    <property type="entry name" value="BacA"/>
    <property type="match status" value="1"/>
</dbReference>
<sequence length="320" mass="33952">MSIFKRQWFVLISAVSAALSVVLFPLEVFSASPNSGGGGVQQMNILQAIVLGFVQGMTEFLPISSTAHLKVVPVALGWGDPGVAFTAIIQLGSIAAVLWYFWGDLTRIIKGATRAIALKDYADYDLRLSLGIVLGTIPIVFFGLLIKTFIPDYDSSPIRSLGAIAVASIVMSLLLGVGEKLGKRERDFEHLTMQDGLLMGLAQALTLIPGVSRSGSTLTSGLFMGLQRETAARFSFLLGIPAITLAGLVELKDLLAEGIADGAALPLIMGVISAAIFSYLAIAGLLSFLKTQSTWVFIWYRLVFGVAILGAISAGILQNS</sequence>
<name>UPPP_NOSS1</name>
<evidence type="ECO:0000255" key="1">
    <source>
        <dbReference type="HAMAP-Rule" id="MF_01006"/>
    </source>
</evidence>